<dbReference type="EC" id="1.5.1.7"/>
<dbReference type="EMBL" id="AY057447">
    <property type="protein sequence ID" value="AAL23682.1"/>
    <property type="status" value="ALT_SEQ"/>
    <property type="molecule type" value="Genomic_DNA"/>
</dbReference>
<dbReference type="EMBL" id="AACD01000051">
    <property type="protein sequence ID" value="EAA63444.1"/>
    <property type="status" value="ALT_SEQ"/>
    <property type="molecule type" value="Genomic_DNA"/>
</dbReference>
<dbReference type="EMBL" id="BN001306">
    <property type="protein sequence ID" value="CBF83833.1"/>
    <property type="molecule type" value="Genomic_DNA"/>
</dbReference>
<dbReference type="RefSeq" id="XP_660477.1">
    <property type="nucleotide sequence ID" value="XM_655385.1"/>
</dbReference>
<dbReference type="SMR" id="Q870G1"/>
<dbReference type="FunCoup" id="Q870G1">
    <property type="interactions" value="193"/>
</dbReference>
<dbReference type="STRING" id="227321.Q870G1"/>
<dbReference type="EnsemblFungi" id="CBF83833">
    <property type="protein sequence ID" value="CBF83833"/>
    <property type="gene ID" value="ANIA_02873"/>
</dbReference>
<dbReference type="KEGG" id="ani:ANIA_02873"/>
<dbReference type="VEuPathDB" id="FungiDB:AN2873"/>
<dbReference type="eggNOG" id="KOG0172">
    <property type="taxonomic scope" value="Eukaryota"/>
</dbReference>
<dbReference type="HOGENOM" id="CLU_011238_0_0_1"/>
<dbReference type="InParanoid" id="Q870G1"/>
<dbReference type="OMA" id="YFFFSHT"/>
<dbReference type="OrthoDB" id="265306at2759"/>
<dbReference type="UniPathway" id="UPA00033">
    <property type="reaction ID" value="UER00034"/>
</dbReference>
<dbReference type="Proteomes" id="UP000000560">
    <property type="component" value="Chromosome VI"/>
</dbReference>
<dbReference type="GO" id="GO:0005737">
    <property type="term" value="C:cytoplasm"/>
    <property type="evidence" value="ECO:0000318"/>
    <property type="project" value="GO_Central"/>
</dbReference>
<dbReference type="GO" id="GO:0003729">
    <property type="term" value="F:mRNA binding"/>
    <property type="evidence" value="ECO:0007669"/>
    <property type="project" value="EnsemblFungi"/>
</dbReference>
<dbReference type="GO" id="GO:0004754">
    <property type="term" value="F:saccharopine dehydrogenase (NAD+, L-lysine-forming) activity"/>
    <property type="evidence" value="ECO:0000250"/>
    <property type="project" value="AspGD"/>
</dbReference>
<dbReference type="GO" id="GO:0004753">
    <property type="term" value="F:saccharopine dehydrogenase activity"/>
    <property type="evidence" value="ECO:0000318"/>
    <property type="project" value="GO_Central"/>
</dbReference>
<dbReference type="GO" id="GO:0019878">
    <property type="term" value="P:lysine biosynthetic process via aminoadipic acid"/>
    <property type="evidence" value="ECO:0000250"/>
    <property type="project" value="AspGD"/>
</dbReference>
<dbReference type="GO" id="GO:0016558">
    <property type="term" value="P:protein import into peroxisome matrix"/>
    <property type="evidence" value="ECO:0007669"/>
    <property type="project" value="EnsemblFungi"/>
</dbReference>
<dbReference type="CDD" id="cd12188">
    <property type="entry name" value="SDH"/>
    <property type="match status" value="1"/>
</dbReference>
<dbReference type="FunFam" id="3.40.50.720:FF:000217">
    <property type="entry name" value="Saccharopine dehydrogenase [NAD(+), L-lysine-forming]"/>
    <property type="match status" value="1"/>
</dbReference>
<dbReference type="FunFam" id="3.40.50.720:FF:000627">
    <property type="entry name" value="Saccharopine dehydrogenase [NAD(+), L-lysine-forming]"/>
    <property type="match status" value="1"/>
</dbReference>
<dbReference type="Gene3D" id="3.40.50.720">
    <property type="entry name" value="NAD(P)-binding Rossmann-like Domain"/>
    <property type="match status" value="2"/>
</dbReference>
<dbReference type="InterPro" id="IPR051168">
    <property type="entry name" value="AASS"/>
</dbReference>
<dbReference type="InterPro" id="IPR007886">
    <property type="entry name" value="AlaDH/PNT_N"/>
</dbReference>
<dbReference type="InterPro" id="IPR007698">
    <property type="entry name" value="AlaDH/PNT_NAD(H)-bd"/>
</dbReference>
<dbReference type="InterPro" id="IPR027281">
    <property type="entry name" value="Lys1"/>
</dbReference>
<dbReference type="InterPro" id="IPR036291">
    <property type="entry name" value="NAD(P)-bd_dom_sf"/>
</dbReference>
<dbReference type="PANTHER" id="PTHR11133">
    <property type="entry name" value="SACCHAROPINE DEHYDROGENASE"/>
    <property type="match status" value="1"/>
</dbReference>
<dbReference type="PANTHER" id="PTHR11133:SF23">
    <property type="entry name" value="SACCHAROPINE DEHYDROGENASE [NAD(+), L-LYSINE-FORMING]"/>
    <property type="match status" value="1"/>
</dbReference>
<dbReference type="Pfam" id="PF05222">
    <property type="entry name" value="AlaDh_PNT_N"/>
    <property type="match status" value="1"/>
</dbReference>
<dbReference type="PIRSF" id="PIRSF018250">
    <property type="entry name" value="Saccharopine_DH_Lys"/>
    <property type="match status" value="1"/>
</dbReference>
<dbReference type="SMART" id="SM01002">
    <property type="entry name" value="AlaDh_PNT_C"/>
    <property type="match status" value="1"/>
</dbReference>
<dbReference type="SMART" id="SM01003">
    <property type="entry name" value="AlaDh_PNT_N"/>
    <property type="match status" value="1"/>
</dbReference>
<dbReference type="SUPFAM" id="SSF52283">
    <property type="entry name" value="Formate/glycerate dehydrogenase catalytic domain-like"/>
    <property type="match status" value="1"/>
</dbReference>
<dbReference type="SUPFAM" id="SSF51735">
    <property type="entry name" value="NAD(P)-binding Rossmann-fold domains"/>
    <property type="match status" value="1"/>
</dbReference>
<proteinExistence type="inferred from homology"/>
<evidence type="ECO:0000250" key="1">
    <source>
        <dbReference type="UniProtKB" id="P38998"/>
    </source>
</evidence>
<evidence type="ECO:0000303" key="2">
    <source>
    </source>
</evidence>
<evidence type="ECO:0000305" key="3"/>
<evidence type="ECO:0000305" key="4">
    <source>
    </source>
</evidence>
<feature type="chain" id="PRO_0000199012" description="Saccharopine dehydrogenase [NAD(+), L-lysine-forming]">
    <location>
        <begin position="1"/>
        <end position="375"/>
    </location>
</feature>
<feature type="active site" description="Proton acceptor" evidence="1">
    <location>
        <position position="78"/>
    </location>
</feature>
<feature type="active site" description="Proton donor" evidence="1">
    <location>
        <position position="96"/>
    </location>
</feature>
<feature type="binding site" evidence="1">
    <location>
        <position position="18"/>
    </location>
    <ligand>
        <name>L-saccharopine</name>
        <dbReference type="ChEBI" id="CHEBI:57951"/>
    </ligand>
</feature>
<feature type="binding site" evidence="1">
    <location>
        <position position="78"/>
    </location>
    <ligand>
        <name>L-saccharopine</name>
        <dbReference type="ChEBI" id="CHEBI:57951"/>
    </ligand>
</feature>
<feature type="binding site" evidence="1">
    <location>
        <position position="101"/>
    </location>
    <ligand>
        <name>L-saccharopine</name>
        <dbReference type="ChEBI" id="CHEBI:57951"/>
    </ligand>
</feature>
<feature type="binding site" evidence="1">
    <location>
        <position position="130"/>
    </location>
    <ligand>
        <name>NAD(+)</name>
        <dbReference type="ChEBI" id="CHEBI:57540"/>
    </ligand>
</feature>
<feature type="binding site" evidence="1">
    <location>
        <position position="131"/>
    </location>
    <ligand>
        <name>L-saccharopine</name>
        <dbReference type="ChEBI" id="CHEBI:57951"/>
    </ligand>
</feature>
<feature type="binding site" evidence="1">
    <location>
        <position position="135"/>
    </location>
    <ligand>
        <name>L-saccharopine</name>
        <dbReference type="ChEBI" id="CHEBI:57951"/>
    </ligand>
</feature>
<feature type="binding site" evidence="1">
    <location>
        <begin position="203"/>
        <end position="204"/>
    </location>
    <ligand>
        <name>NAD(+)</name>
        <dbReference type="ChEBI" id="CHEBI:57540"/>
    </ligand>
</feature>
<feature type="binding site" evidence="1">
    <location>
        <position position="227"/>
    </location>
    <ligand>
        <name>NAD(+)</name>
        <dbReference type="ChEBI" id="CHEBI:57540"/>
    </ligand>
</feature>
<feature type="binding site" evidence="1">
    <location>
        <position position="231"/>
    </location>
    <ligand>
        <name>NAD(+)</name>
        <dbReference type="ChEBI" id="CHEBI:57540"/>
    </ligand>
</feature>
<feature type="binding site" evidence="1">
    <location>
        <position position="252"/>
    </location>
    <ligand>
        <name>NAD(+)</name>
        <dbReference type="ChEBI" id="CHEBI:57540"/>
    </ligand>
</feature>
<feature type="binding site" evidence="1">
    <location>
        <position position="279"/>
    </location>
    <ligand>
        <name>NAD(+)</name>
        <dbReference type="ChEBI" id="CHEBI:57540"/>
    </ligand>
</feature>
<feature type="binding site" evidence="1">
    <location>
        <begin position="280"/>
        <end position="282"/>
    </location>
    <ligand>
        <name>L-saccharopine</name>
        <dbReference type="ChEBI" id="CHEBI:57951"/>
    </ligand>
</feature>
<feature type="binding site" evidence="1">
    <location>
        <begin position="322"/>
        <end position="325"/>
    </location>
    <ligand>
        <name>NAD(+)</name>
        <dbReference type="ChEBI" id="CHEBI:57540"/>
    </ligand>
</feature>
<feature type="disulfide bond" evidence="1">
    <location>
        <begin position="205"/>
        <end position="250"/>
    </location>
</feature>
<sequence length="375" mass="41098">MGSNKIWLRAETKPAEARSALTPTTCKALIDAGYEVTVERSTQRIFDDDEFAKVGAPLVEEGSWVKDAPKDAYILGLKELPEDDFPLEHVHISFAHCYKEQAGWEKVLSRWPRGGGVLLDLEFLTDDAGRRVAAFGFSAGYAGAALAVKNWAWQLTHPEGEPLAGEKPYANQDLLIQSVKESLQAGQKQSGKSPKILVIGALGRCGKGAVQLAKDVGIPESDIIQWDMEETKKGGPFKEIVEDADIFVNCIYLSSKIPHFVNVESLSTPSRRLSVICDVSADTTNPNNPIPVYNITTTFDKPTVPVTLPNGTQGTPLSVISIDHLPSLLPRESSEMFSEALMPSLLQLKDRENARVWKQAEDLFNQKVATLPQTA</sequence>
<keyword id="KW-0028">Amino-acid biosynthesis</keyword>
<keyword id="KW-1015">Disulfide bond</keyword>
<keyword id="KW-0457">Lysine biosynthesis</keyword>
<keyword id="KW-0520">NAD</keyword>
<keyword id="KW-0560">Oxidoreductase</keyword>
<keyword id="KW-1185">Reference proteome</keyword>
<gene>
    <name evidence="2" type="primary">lysA</name>
    <name type="ORF">AN2873</name>
</gene>
<accession>Q870G1</accession>
<accession>C8VJB0</accession>
<accession>Q5B9A7</accession>
<protein>
    <recommendedName>
        <fullName>Saccharopine dehydrogenase [NAD(+), L-lysine-forming]</fullName>
        <shortName>SDH</shortName>
        <ecNumber>1.5.1.7</ecNumber>
    </recommendedName>
    <alternativeName>
        <fullName>Lysine--2-oxoglutarate reductase</fullName>
    </alternativeName>
</protein>
<name>LYS1_EMENI</name>
<organism>
    <name type="scientific">Emericella nidulans (strain FGSC A4 / ATCC 38163 / CBS 112.46 / NRRL 194 / M139)</name>
    <name type="common">Aspergillus nidulans</name>
    <dbReference type="NCBI Taxonomy" id="227321"/>
    <lineage>
        <taxon>Eukaryota</taxon>
        <taxon>Fungi</taxon>
        <taxon>Dikarya</taxon>
        <taxon>Ascomycota</taxon>
        <taxon>Pezizomycotina</taxon>
        <taxon>Eurotiomycetes</taxon>
        <taxon>Eurotiomycetidae</taxon>
        <taxon>Eurotiales</taxon>
        <taxon>Aspergillaceae</taxon>
        <taxon>Aspergillus</taxon>
        <taxon>Aspergillus subgen. Nidulantes</taxon>
    </lineage>
</organism>
<comment type="function">
    <text evidence="1">Catalyzes the NAD(+)-dependent cleavage of saccharopine to L-lysine and 2-oxoglutarate, the final step in the alpha-aminoadipate (AAA) pathway for lysin biosynthesis.</text>
</comment>
<comment type="catalytic activity">
    <reaction evidence="1">
        <text>L-saccharopine + NAD(+) + H2O = L-lysine + 2-oxoglutarate + NADH + H(+)</text>
        <dbReference type="Rhea" id="RHEA:12440"/>
        <dbReference type="ChEBI" id="CHEBI:15377"/>
        <dbReference type="ChEBI" id="CHEBI:15378"/>
        <dbReference type="ChEBI" id="CHEBI:16810"/>
        <dbReference type="ChEBI" id="CHEBI:32551"/>
        <dbReference type="ChEBI" id="CHEBI:57540"/>
        <dbReference type="ChEBI" id="CHEBI:57945"/>
        <dbReference type="ChEBI" id="CHEBI:57951"/>
        <dbReference type="EC" id="1.5.1.7"/>
    </reaction>
</comment>
<comment type="pathway">
    <text evidence="4">Amino-acid biosynthesis; L-lysine biosynthesis via AAA pathway; L-lysine from L-alpha-aminoadipate (fungal route): step 3/3.</text>
</comment>
<comment type="subunit">
    <text evidence="1">Monomer.</text>
</comment>
<comment type="similarity">
    <text evidence="3">Belongs to the AlaDH/PNT family.</text>
</comment>
<comment type="sequence caution" evidence="3">
    <conflict type="erroneous gene model prediction">
        <sequence resource="EMBL-CDS" id="AAL23682"/>
    </conflict>
</comment>
<comment type="sequence caution" evidence="3">
    <conflict type="erroneous gene model prediction">
        <sequence resource="EMBL-CDS" id="EAA63444"/>
    </conflict>
    <text>The predicted gene AN2873 has been split into 2 genes: AN2873 and AN11684.</text>
</comment>
<reference key="1">
    <citation type="journal article" date="2003" name="Curr. Genet.">
        <title>Impact of the cross-pathway control on the regulation of lysine and penicillin biosynthesis in Aspergillus nidulans.</title>
        <authorList>
            <person name="Busch S."/>
            <person name="Bode H.B."/>
            <person name="Brakhage A.A."/>
            <person name="Braus G.H."/>
        </authorList>
    </citation>
    <scope>NUCLEOTIDE SEQUENCE [GENOMIC DNA]</scope>
    <scope>PATHWAY</scope>
</reference>
<reference key="2">
    <citation type="journal article" date="2005" name="Nature">
        <title>Sequencing of Aspergillus nidulans and comparative analysis with A. fumigatus and A. oryzae.</title>
        <authorList>
            <person name="Galagan J.E."/>
            <person name="Calvo S.E."/>
            <person name="Cuomo C."/>
            <person name="Ma L.-J."/>
            <person name="Wortman J.R."/>
            <person name="Batzoglou S."/>
            <person name="Lee S.-I."/>
            <person name="Bastuerkmen M."/>
            <person name="Spevak C.C."/>
            <person name="Clutterbuck J."/>
            <person name="Kapitonov V."/>
            <person name="Jurka J."/>
            <person name="Scazzocchio C."/>
            <person name="Farman M.L."/>
            <person name="Butler J."/>
            <person name="Purcell S."/>
            <person name="Harris S."/>
            <person name="Braus G.H."/>
            <person name="Draht O."/>
            <person name="Busch S."/>
            <person name="D'Enfert C."/>
            <person name="Bouchier C."/>
            <person name="Goldman G.H."/>
            <person name="Bell-Pedersen D."/>
            <person name="Griffiths-Jones S."/>
            <person name="Doonan J.H."/>
            <person name="Yu J."/>
            <person name="Vienken K."/>
            <person name="Pain A."/>
            <person name="Freitag M."/>
            <person name="Selker E.U."/>
            <person name="Archer D.B."/>
            <person name="Penalva M.A."/>
            <person name="Oakley B.R."/>
            <person name="Momany M."/>
            <person name="Tanaka T."/>
            <person name="Kumagai T."/>
            <person name="Asai K."/>
            <person name="Machida M."/>
            <person name="Nierman W.C."/>
            <person name="Denning D.W."/>
            <person name="Caddick M.X."/>
            <person name="Hynes M."/>
            <person name="Paoletti M."/>
            <person name="Fischer R."/>
            <person name="Miller B.L."/>
            <person name="Dyer P.S."/>
            <person name="Sachs M.S."/>
            <person name="Osmani S.A."/>
            <person name="Birren B.W."/>
        </authorList>
    </citation>
    <scope>NUCLEOTIDE SEQUENCE [LARGE SCALE GENOMIC DNA]</scope>
    <source>
        <strain>FGSC A4 / ATCC 38163 / CBS 112.46 / NRRL 194 / M139</strain>
    </source>
</reference>
<reference key="3">
    <citation type="journal article" date="2009" name="Fungal Genet. Biol.">
        <title>The 2008 update of the Aspergillus nidulans genome annotation: a community effort.</title>
        <authorList>
            <person name="Wortman J.R."/>
            <person name="Gilsenan J.M."/>
            <person name="Joardar V."/>
            <person name="Deegan J."/>
            <person name="Clutterbuck J."/>
            <person name="Andersen M.R."/>
            <person name="Archer D."/>
            <person name="Bencina M."/>
            <person name="Braus G."/>
            <person name="Coutinho P."/>
            <person name="von Dohren H."/>
            <person name="Doonan J."/>
            <person name="Driessen A.J."/>
            <person name="Durek P."/>
            <person name="Espeso E."/>
            <person name="Fekete E."/>
            <person name="Flipphi M."/>
            <person name="Estrada C.G."/>
            <person name="Geysens S."/>
            <person name="Goldman G."/>
            <person name="de Groot P.W."/>
            <person name="Hansen K."/>
            <person name="Harris S.D."/>
            <person name="Heinekamp T."/>
            <person name="Helmstaedt K."/>
            <person name="Henrissat B."/>
            <person name="Hofmann G."/>
            <person name="Homan T."/>
            <person name="Horio T."/>
            <person name="Horiuchi H."/>
            <person name="James S."/>
            <person name="Jones M."/>
            <person name="Karaffa L."/>
            <person name="Karanyi Z."/>
            <person name="Kato M."/>
            <person name="Keller N."/>
            <person name="Kelly D.E."/>
            <person name="Kiel J.A."/>
            <person name="Kim J.M."/>
            <person name="van der Klei I.J."/>
            <person name="Klis F.M."/>
            <person name="Kovalchuk A."/>
            <person name="Krasevec N."/>
            <person name="Kubicek C.P."/>
            <person name="Liu B."/>
            <person name="Maccabe A."/>
            <person name="Meyer V."/>
            <person name="Mirabito P."/>
            <person name="Miskei M."/>
            <person name="Mos M."/>
            <person name="Mullins J."/>
            <person name="Nelson D.R."/>
            <person name="Nielsen J."/>
            <person name="Oakley B.R."/>
            <person name="Osmani S.A."/>
            <person name="Pakula T."/>
            <person name="Paszewski A."/>
            <person name="Paulsen I."/>
            <person name="Pilsyk S."/>
            <person name="Pocsi I."/>
            <person name="Punt P.J."/>
            <person name="Ram A.F."/>
            <person name="Ren Q."/>
            <person name="Robellet X."/>
            <person name="Robson G."/>
            <person name="Seiboth B."/>
            <person name="van Solingen P."/>
            <person name="Specht T."/>
            <person name="Sun J."/>
            <person name="Taheri-Talesh N."/>
            <person name="Takeshita N."/>
            <person name="Ussery D."/>
            <person name="vanKuyk P.A."/>
            <person name="Visser H."/>
            <person name="van de Vondervoort P.J."/>
            <person name="de Vries R.P."/>
            <person name="Walton J."/>
            <person name="Xiang X."/>
            <person name="Xiong Y."/>
            <person name="Zeng A.P."/>
            <person name="Brandt B.W."/>
            <person name="Cornell M.J."/>
            <person name="van den Hondel C.A."/>
            <person name="Visser J."/>
            <person name="Oliver S.G."/>
            <person name="Turner G."/>
        </authorList>
    </citation>
    <scope>GENOME REANNOTATION</scope>
    <source>
        <strain>FGSC A4 / ATCC 38163 / CBS 112.46 / NRRL 194 / M139</strain>
    </source>
</reference>